<gene>
    <name type="primary">AIM11</name>
    <name type="synonym">GEP8</name>
    <name type="ORF">EC1118_1E8_2245g</name>
</gene>
<feature type="chain" id="PRO_0000405655" description="Altered inheritance of mitochondria protein 11">
    <location>
        <begin position="1"/>
        <end position="137"/>
    </location>
</feature>
<feature type="transmembrane region" description="Helical" evidence="1">
    <location>
        <begin position="20"/>
        <end position="37"/>
    </location>
</feature>
<feature type="transmembrane region" description="Helical" evidence="1">
    <location>
        <begin position="66"/>
        <end position="88"/>
    </location>
</feature>
<evidence type="ECO:0000255" key="1"/>
<evidence type="ECO:0000305" key="2"/>
<name>AIM11_YEAS8</name>
<organism>
    <name type="scientific">Saccharomyces cerevisiae (strain Lalvin EC1118 / Prise de mousse)</name>
    <name type="common">Baker's yeast</name>
    <dbReference type="NCBI Taxonomy" id="643680"/>
    <lineage>
        <taxon>Eukaryota</taxon>
        <taxon>Fungi</taxon>
        <taxon>Dikarya</taxon>
        <taxon>Ascomycota</taxon>
        <taxon>Saccharomycotina</taxon>
        <taxon>Saccharomycetes</taxon>
        <taxon>Saccharomycetales</taxon>
        <taxon>Saccharomycetaceae</taxon>
        <taxon>Saccharomyces</taxon>
    </lineage>
</organism>
<proteinExistence type="inferred from homology"/>
<comment type="subcellular location">
    <subcellularLocation>
        <location evidence="2">Membrane</location>
        <topology evidence="2">Multi-pass membrane protein</topology>
    </subcellularLocation>
</comment>
<comment type="similarity">
    <text evidence="2">Belongs to the AIM11 family.</text>
</comment>
<sequence>MIEEKKELKKRRVLQMARFYGAAAFTLITMRLISRAIKVRKYVPSIFQQNYKLPPFSQRNEAMSALTYASAASIGTFSTLIFGFCWALDISTAREFVFKTREFMSLPQALETDTSMDEETSKLTKQLQDLLSSENNK</sequence>
<protein>
    <recommendedName>
        <fullName>Altered inheritance of mitochondria protein 11</fullName>
    </recommendedName>
    <alternativeName>
        <fullName>Genetic interactor of prohibitins 8</fullName>
    </alternativeName>
</protein>
<reference key="1">
    <citation type="journal article" date="2009" name="Proc. Natl. Acad. Sci. U.S.A.">
        <title>Eukaryote-to-eukaryote gene transfer events revealed by the genome sequence of the wine yeast Saccharomyces cerevisiae EC1118.</title>
        <authorList>
            <person name="Novo M."/>
            <person name="Bigey F."/>
            <person name="Beyne E."/>
            <person name="Galeote V."/>
            <person name="Gavory F."/>
            <person name="Mallet S."/>
            <person name="Cambon B."/>
            <person name="Legras J.-L."/>
            <person name="Wincker P."/>
            <person name="Casaregola S."/>
            <person name="Dequin S."/>
        </authorList>
    </citation>
    <scope>NUCLEOTIDE SEQUENCE [LARGE SCALE GENOMIC DNA]</scope>
    <source>
        <strain>Lalvin EC1118 / Prise de mousse</strain>
    </source>
</reference>
<keyword id="KW-0472">Membrane</keyword>
<keyword id="KW-0812">Transmembrane</keyword>
<keyword id="KW-1133">Transmembrane helix</keyword>
<accession>C8Z7B2</accession>
<dbReference type="EMBL" id="FN393067">
    <property type="protein sequence ID" value="CAY79278.1"/>
    <property type="molecule type" value="Genomic_DNA"/>
</dbReference>
<dbReference type="SMR" id="C8Z7B2"/>
<dbReference type="HOGENOM" id="CLU_118700_0_0_1"/>
<dbReference type="OrthoDB" id="12004at4893"/>
<dbReference type="Proteomes" id="UP000000286">
    <property type="component" value="Chromosome V, Scaffold EC1118_1E8"/>
</dbReference>
<dbReference type="GO" id="GO:0016020">
    <property type="term" value="C:membrane"/>
    <property type="evidence" value="ECO:0007669"/>
    <property type="project" value="UniProtKB-SubCell"/>
</dbReference>
<dbReference type="GO" id="GO:0005739">
    <property type="term" value="C:mitochondrion"/>
    <property type="evidence" value="ECO:0007669"/>
    <property type="project" value="TreeGrafter"/>
</dbReference>
<dbReference type="InterPro" id="IPR038814">
    <property type="entry name" value="AIM11"/>
</dbReference>
<dbReference type="PANTHER" id="PTHR39136">
    <property type="entry name" value="ALTERED INHERITANCE OF MITOCHONDRIA PROTEIN 11"/>
    <property type="match status" value="1"/>
</dbReference>
<dbReference type="PANTHER" id="PTHR39136:SF1">
    <property type="entry name" value="ALTERED INHERITANCE OF MITOCHONDRIA PROTEIN 11"/>
    <property type="match status" value="1"/>
</dbReference>